<feature type="chain" id="PRO_0000204206" description="Regulator of G-protein signaling 9">
    <location>
        <begin position="1"/>
        <end position="484"/>
    </location>
</feature>
<feature type="domain" description="DEP" evidence="2">
    <location>
        <begin position="30"/>
        <end position="105"/>
    </location>
</feature>
<feature type="domain" description="G protein gamma">
    <location>
        <begin position="219"/>
        <end position="280"/>
    </location>
</feature>
<feature type="domain" description="RGS" evidence="3">
    <location>
        <begin position="299"/>
        <end position="414"/>
    </location>
</feature>
<protein>
    <recommendedName>
        <fullName>Regulator of G-protein signaling 9</fullName>
        <shortName>RGS9</shortName>
    </recommendedName>
</protein>
<sequence>MTIRHQGQQYRPRMAFLQKIEALVKDMQNPDTGVKTQSQRVLVTSVPHAMTGGDVLQWIIQRLWISSLEAQNLGNFIVKYGYIYPLQDPKNLILKPDSSLYRFQTPYFWPTQQWPAEDTDYAIYLAKRNIKKKGILEEYEKENYNFLNKKINYKWDFVIMQAKEQYRAGKERNKADRYALDCQEKAYWLVHRCPPGMNDVLDYGLDRVTNPNEVKKQTITAVKKEIMYYQQALMRSTVKSSVSLGGIVKYSEQFSSNDAIMSGCLPSNPWITDDTQFWDLNAKLVEIPTKMRVERWAFNFSELIRDPKGRQSFQYFLRKEFSGENLGFWEACEDLKYGDQSKVKEKAEEIYKLFLAPGARRWINIDGKTMDITVKGLKHPHRYVLDAAQTHIYMLMKKDSYARYLKSPIYKEMLAKAIEPQETTKKSSTLPFIRRHLRSSPSPVILRQLEEEAKAREAANTVDITQVMSKLDRRSLLKKELPPK</sequence>
<organism>
    <name type="scientific">Tamias striatus</name>
    <name type="common">Eastern chipmunk</name>
    <name type="synonym">Sciurus striatus</name>
    <dbReference type="NCBI Taxonomy" id="45474"/>
    <lineage>
        <taxon>Eukaryota</taxon>
        <taxon>Metazoa</taxon>
        <taxon>Chordata</taxon>
        <taxon>Craniata</taxon>
        <taxon>Vertebrata</taxon>
        <taxon>Euteleostomi</taxon>
        <taxon>Mammalia</taxon>
        <taxon>Eutheria</taxon>
        <taxon>Euarchontoglires</taxon>
        <taxon>Glires</taxon>
        <taxon>Rodentia</taxon>
        <taxon>Sciuromorpha</taxon>
        <taxon>Sciuridae</taxon>
        <taxon>Xerinae</taxon>
        <taxon>Marmotini</taxon>
        <taxon>Tamias</taxon>
    </lineage>
</organism>
<evidence type="ECO:0000250" key="1"/>
<evidence type="ECO:0000255" key="2">
    <source>
        <dbReference type="PROSITE-ProRule" id="PRU00066"/>
    </source>
</evidence>
<evidence type="ECO:0000255" key="3">
    <source>
        <dbReference type="PROSITE-ProRule" id="PRU00171"/>
    </source>
</evidence>
<evidence type="ECO:0000305" key="4">
    <source>
    </source>
</evidence>
<accession>Q80ZD1</accession>
<keyword id="KW-0472">Membrane</keyword>
<keyword id="KW-0716">Sensory transduction</keyword>
<keyword id="KW-0734">Signal transduction inhibitor</keyword>
<keyword id="KW-0844">Vision</keyword>
<comment type="function">
    <text evidence="1">Inhibits signal transduction by increasing the GTPase activity of G protein alpha subunits thereby driving them into their inactive GDP-bound form. Binds to G(t)-alpha. Involved in phototransduction; key element in the recovery phase of visual transduction (By similarity).</text>
</comment>
<comment type="subunit">
    <text evidence="4">Heterodimer with Gbeta5. Interacts with RGS7BP, leading to regulate the subcellular location of the heterodimer formed with Gbeta5. Component of the RGS9-1-Gbeta5 complex composed of RGS9 (RGS9-1), Gbeta5 (GNB5) and RGS9BP (Probable).</text>
</comment>
<comment type="subcellular location">
    <subcellularLocation>
        <location>Membrane</location>
        <topology>Peripheral membrane protein</topology>
    </subcellularLocation>
    <text evidence="1">Targeted to the membrane via its interaction with RGS9BP.</text>
</comment>
<comment type="PTM">
    <text evidence="1">Phosphorylation is decreased by light exposition.</text>
</comment>
<name>RGS9_TAMST</name>
<dbReference type="EMBL" id="AF480879">
    <property type="protein sequence ID" value="AAO49275.1"/>
    <property type="molecule type" value="mRNA"/>
</dbReference>
<dbReference type="SMR" id="Q80ZD1"/>
<dbReference type="GO" id="GO:0005737">
    <property type="term" value="C:cytoplasm"/>
    <property type="evidence" value="ECO:0007669"/>
    <property type="project" value="TreeGrafter"/>
</dbReference>
<dbReference type="GO" id="GO:0043005">
    <property type="term" value="C:neuron projection"/>
    <property type="evidence" value="ECO:0007669"/>
    <property type="project" value="TreeGrafter"/>
</dbReference>
<dbReference type="GO" id="GO:0005886">
    <property type="term" value="C:plasma membrane"/>
    <property type="evidence" value="ECO:0007669"/>
    <property type="project" value="TreeGrafter"/>
</dbReference>
<dbReference type="GO" id="GO:0005096">
    <property type="term" value="F:GTPase activator activity"/>
    <property type="evidence" value="ECO:0007669"/>
    <property type="project" value="TreeGrafter"/>
</dbReference>
<dbReference type="GO" id="GO:0007186">
    <property type="term" value="P:G protein-coupled receptor signaling pathway"/>
    <property type="evidence" value="ECO:0007669"/>
    <property type="project" value="InterPro"/>
</dbReference>
<dbReference type="GO" id="GO:0035556">
    <property type="term" value="P:intracellular signal transduction"/>
    <property type="evidence" value="ECO:0007669"/>
    <property type="project" value="InterPro"/>
</dbReference>
<dbReference type="GO" id="GO:0009968">
    <property type="term" value="P:negative regulation of signal transduction"/>
    <property type="evidence" value="ECO:0007669"/>
    <property type="project" value="UniProtKB-KW"/>
</dbReference>
<dbReference type="GO" id="GO:0008277">
    <property type="term" value="P:regulation of G protein-coupled receptor signaling pathway"/>
    <property type="evidence" value="ECO:0007669"/>
    <property type="project" value="InterPro"/>
</dbReference>
<dbReference type="GO" id="GO:0007601">
    <property type="term" value="P:visual perception"/>
    <property type="evidence" value="ECO:0007669"/>
    <property type="project" value="UniProtKB-KW"/>
</dbReference>
<dbReference type="CDD" id="cd04450">
    <property type="entry name" value="DEP_RGS7-like"/>
    <property type="match status" value="1"/>
</dbReference>
<dbReference type="CDD" id="cd00068">
    <property type="entry name" value="GGL"/>
    <property type="match status" value="1"/>
</dbReference>
<dbReference type="CDD" id="cd08739">
    <property type="entry name" value="RGS_RGS9"/>
    <property type="match status" value="1"/>
</dbReference>
<dbReference type="FunFam" id="1.10.1240.60:FF:000001">
    <property type="entry name" value="Regulator of G-protein signaling 6"/>
    <property type="match status" value="1"/>
</dbReference>
<dbReference type="FunFam" id="1.10.167.10:FF:000002">
    <property type="entry name" value="Regulator of G-protein signaling 6 isoform 9"/>
    <property type="match status" value="1"/>
</dbReference>
<dbReference type="FunFam" id="1.10.10.10:FF:000329">
    <property type="entry name" value="regulator of G-protein signaling 9 isoform X2"/>
    <property type="match status" value="1"/>
</dbReference>
<dbReference type="Gene3D" id="1.10.1240.60">
    <property type="match status" value="1"/>
</dbReference>
<dbReference type="Gene3D" id="1.10.167.10">
    <property type="entry name" value="Regulator of G-protein Signalling 4, domain 2"/>
    <property type="match status" value="1"/>
</dbReference>
<dbReference type="Gene3D" id="4.10.260.10">
    <property type="entry name" value="Transducin (heterotrimeric G protein), gamma chain"/>
    <property type="match status" value="1"/>
</dbReference>
<dbReference type="Gene3D" id="1.10.10.10">
    <property type="entry name" value="Winged helix-like DNA-binding domain superfamily/Winged helix DNA-binding domain"/>
    <property type="match status" value="1"/>
</dbReference>
<dbReference type="InterPro" id="IPR000591">
    <property type="entry name" value="DEP_dom"/>
</dbReference>
<dbReference type="InterPro" id="IPR015898">
    <property type="entry name" value="G-protein_gamma-like_dom"/>
</dbReference>
<dbReference type="InterPro" id="IPR036284">
    <property type="entry name" value="GGL_sf"/>
</dbReference>
<dbReference type="InterPro" id="IPR016137">
    <property type="entry name" value="RGS"/>
</dbReference>
<dbReference type="InterPro" id="IPR047016">
    <property type="entry name" value="RGS6/7/9/11"/>
</dbReference>
<dbReference type="InterPro" id="IPR047017">
    <property type="entry name" value="RGS6/7/9/11_DHEX_sf"/>
</dbReference>
<dbReference type="InterPro" id="IPR047077">
    <property type="entry name" value="RGS9_RGS"/>
</dbReference>
<dbReference type="InterPro" id="IPR040759">
    <property type="entry name" value="RGS_DHEX"/>
</dbReference>
<dbReference type="InterPro" id="IPR036305">
    <property type="entry name" value="RGS_sf"/>
</dbReference>
<dbReference type="InterPro" id="IPR044926">
    <property type="entry name" value="RGS_subdomain_2"/>
</dbReference>
<dbReference type="InterPro" id="IPR036388">
    <property type="entry name" value="WH-like_DNA-bd_sf"/>
</dbReference>
<dbReference type="InterPro" id="IPR036390">
    <property type="entry name" value="WH_DNA-bd_sf"/>
</dbReference>
<dbReference type="PANTHER" id="PTHR45746">
    <property type="entry name" value="LP21163P"/>
    <property type="match status" value="1"/>
</dbReference>
<dbReference type="PANTHER" id="PTHR45746:SF1">
    <property type="entry name" value="REGULATOR OF G-PROTEIN SIGNALING 9"/>
    <property type="match status" value="1"/>
</dbReference>
<dbReference type="Pfam" id="PF00610">
    <property type="entry name" value="DEP"/>
    <property type="match status" value="1"/>
</dbReference>
<dbReference type="Pfam" id="PF00631">
    <property type="entry name" value="G-gamma"/>
    <property type="match status" value="1"/>
</dbReference>
<dbReference type="Pfam" id="PF00615">
    <property type="entry name" value="RGS"/>
    <property type="match status" value="1"/>
</dbReference>
<dbReference type="Pfam" id="PF18148">
    <property type="entry name" value="RGS_DHEX"/>
    <property type="match status" value="1"/>
</dbReference>
<dbReference type="PRINTS" id="PR01301">
    <property type="entry name" value="RGSPROTEIN"/>
</dbReference>
<dbReference type="SMART" id="SM00049">
    <property type="entry name" value="DEP"/>
    <property type="match status" value="1"/>
</dbReference>
<dbReference type="SMART" id="SM01224">
    <property type="entry name" value="G_gamma"/>
    <property type="match status" value="1"/>
</dbReference>
<dbReference type="SMART" id="SM00224">
    <property type="entry name" value="GGL"/>
    <property type="match status" value="1"/>
</dbReference>
<dbReference type="SMART" id="SM00315">
    <property type="entry name" value="RGS"/>
    <property type="match status" value="1"/>
</dbReference>
<dbReference type="SUPFAM" id="SSF48097">
    <property type="entry name" value="Regulator of G-protein signaling, RGS"/>
    <property type="match status" value="1"/>
</dbReference>
<dbReference type="SUPFAM" id="SSF48670">
    <property type="entry name" value="Transducin (heterotrimeric G protein), gamma chain"/>
    <property type="match status" value="1"/>
</dbReference>
<dbReference type="SUPFAM" id="SSF46785">
    <property type="entry name" value="Winged helix' DNA-binding domain"/>
    <property type="match status" value="1"/>
</dbReference>
<dbReference type="PROSITE" id="PS50186">
    <property type="entry name" value="DEP"/>
    <property type="match status" value="1"/>
</dbReference>
<dbReference type="PROSITE" id="PS50132">
    <property type="entry name" value="RGS"/>
    <property type="match status" value="1"/>
</dbReference>
<proteinExistence type="evidence at protein level"/>
<reference key="1">
    <citation type="journal article" date="2003" name="J. Neurosci.">
        <title>GTPase regulators and photoresponses in cones of the eastern chipmunk.</title>
        <authorList>
            <person name="Zhang X."/>
            <person name="Wensel T.G."/>
            <person name="Kraft T.W."/>
        </authorList>
    </citation>
    <scope>NUCLEOTIDE SEQUENCE [MRNA]</scope>
    <scope>INTERACTION WITH GBB5</scope>
    <source>
        <tissue>Retina</tissue>
    </source>
</reference>